<gene>
    <name type="primary">Cfap96</name>
</gene>
<accession>Q3U1D9</accession>
<organism>
    <name type="scientific">Mus musculus</name>
    <name type="common">Mouse</name>
    <dbReference type="NCBI Taxonomy" id="10090"/>
    <lineage>
        <taxon>Eukaryota</taxon>
        <taxon>Metazoa</taxon>
        <taxon>Chordata</taxon>
        <taxon>Craniata</taxon>
        <taxon>Vertebrata</taxon>
        <taxon>Euteleostomi</taxon>
        <taxon>Mammalia</taxon>
        <taxon>Eutheria</taxon>
        <taxon>Euarchontoglires</taxon>
        <taxon>Glires</taxon>
        <taxon>Rodentia</taxon>
        <taxon>Myomorpha</taxon>
        <taxon>Muroidea</taxon>
        <taxon>Muridae</taxon>
        <taxon>Murinae</taxon>
        <taxon>Mus</taxon>
        <taxon>Mus</taxon>
    </lineage>
</organism>
<feature type="chain" id="PRO_0000341951" description="Cilia-and flagella-associated protein 96">
    <location>
        <begin position="1"/>
        <end position="316"/>
    </location>
</feature>
<feature type="region of interest" description="Disordered" evidence="2">
    <location>
        <begin position="220"/>
        <end position="242"/>
    </location>
</feature>
<feature type="compositionally biased region" description="Low complexity" evidence="2">
    <location>
        <begin position="227"/>
        <end position="237"/>
    </location>
</feature>
<dbReference type="EMBL" id="BC107256">
    <property type="protein sequence ID" value="AAI07257.1"/>
    <property type="molecule type" value="mRNA"/>
</dbReference>
<dbReference type="EMBL" id="AK156041">
    <property type="protein sequence ID" value="BAE33559.1"/>
    <property type="molecule type" value="mRNA"/>
</dbReference>
<dbReference type="CCDS" id="CCDS22283.1"/>
<dbReference type="RefSeq" id="NP_001028320.1">
    <property type="nucleotide sequence ID" value="NM_001033148.3"/>
</dbReference>
<dbReference type="RefSeq" id="NP_001346042.1">
    <property type="nucleotide sequence ID" value="NM_001359113.1"/>
</dbReference>
<dbReference type="RefSeq" id="XP_006509547.1">
    <property type="nucleotide sequence ID" value="XM_006509484.3"/>
</dbReference>
<dbReference type="SMR" id="Q3U1D9"/>
<dbReference type="FunCoup" id="Q3U1D9">
    <property type="interactions" value="165"/>
</dbReference>
<dbReference type="STRING" id="10090.ENSMUSP00000092961"/>
<dbReference type="GlyGen" id="Q3U1D9">
    <property type="glycosylation" value="1 site"/>
</dbReference>
<dbReference type="iPTMnet" id="Q3U1D9"/>
<dbReference type="PhosphoSitePlus" id="Q3U1D9"/>
<dbReference type="PaxDb" id="10090-ENSMUSP00000092961"/>
<dbReference type="Antibodypedia" id="52303">
    <property type="antibodies" value="22 antibodies from 10 providers"/>
</dbReference>
<dbReference type="DNASU" id="69479"/>
<dbReference type="Ensembl" id="ENSMUST00000095323.8">
    <property type="protein sequence ID" value="ENSMUSP00000092961.2"/>
    <property type="gene ID" value="ENSMUSG00000071103.11"/>
</dbReference>
<dbReference type="Ensembl" id="ENSMUST00000098786.3">
    <property type="protein sequence ID" value="ENSMUSP00000096383.3"/>
    <property type="gene ID" value="ENSMUSG00000071103.11"/>
</dbReference>
<dbReference type="GeneID" id="69479"/>
<dbReference type="KEGG" id="mmu:69479"/>
<dbReference type="UCSC" id="uc009lpn.1">
    <property type="organism name" value="mouse"/>
</dbReference>
<dbReference type="AGR" id="MGI:1916729"/>
<dbReference type="CTD" id="441054"/>
<dbReference type="MGI" id="MGI:1916729">
    <property type="gene designation" value="Cfap96"/>
</dbReference>
<dbReference type="VEuPathDB" id="HostDB:ENSMUSG00000071103"/>
<dbReference type="eggNOG" id="ENOG502QVET">
    <property type="taxonomic scope" value="Eukaryota"/>
</dbReference>
<dbReference type="GeneTree" id="ENSGT00390000010980"/>
<dbReference type="HOGENOM" id="CLU_078899_0_0_1"/>
<dbReference type="InParanoid" id="Q3U1D9"/>
<dbReference type="OMA" id="YMMEEAK"/>
<dbReference type="OrthoDB" id="283553at2759"/>
<dbReference type="PhylomeDB" id="Q3U1D9"/>
<dbReference type="TreeFam" id="TF329198"/>
<dbReference type="BioGRID-ORCS" id="69479">
    <property type="hits" value="3 hits in 80 CRISPR screens"/>
</dbReference>
<dbReference type="PRO" id="PR:Q3U1D9"/>
<dbReference type="Proteomes" id="UP000000589">
    <property type="component" value="Chromosome 8"/>
</dbReference>
<dbReference type="RNAct" id="Q3U1D9">
    <property type="molecule type" value="protein"/>
</dbReference>
<dbReference type="Bgee" id="ENSMUSG00000071103">
    <property type="expression patterns" value="Expressed in spermatid and 119 other cell types or tissues"/>
</dbReference>
<dbReference type="ExpressionAtlas" id="Q3U1D9">
    <property type="expression patterns" value="baseline and differential"/>
</dbReference>
<dbReference type="GO" id="GO:0097731">
    <property type="term" value="C:9+0 non-motile cilium"/>
    <property type="evidence" value="ECO:0007669"/>
    <property type="project" value="Ensembl"/>
</dbReference>
<dbReference type="GO" id="GO:0005813">
    <property type="term" value="C:centrosome"/>
    <property type="evidence" value="ECO:0000250"/>
    <property type="project" value="UniProtKB"/>
</dbReference>
<dbReference type="GO" id="GO:0005881">
    <property type="term" value="C:cytoplasmic microtubule"/>
    <property type="evidence" value="ECO:0007669"/>
    <property type="project" value="Ensembl"/>
</dbReference>
<dbReference type="InterPro" id="IPR029358">
    <property type="entry name" value="CFAP96"/>
</dbReference>
<dbReference type="PANTHER" id="PTHR31144">
    <property type="entry name" value="UPF0602 PROTEIN C4ORF47"/>
    <property type="match status" value="1"/>
</dbReference>
<dbReference type="PANTHER" id="PTHR31144:SF1">
    <property type="entry name" value="UPF0602 PROTEIN C4ORF47"/>
    <property type="match status" value="1"/>
</dbReference>
<dbReference type="Pfam" id="PF15239">
    <property type="entry name" value="CFAP96-like"/>
    <property type="match status" value="1"/>
</dbReference>
<comment type="subcellular location">
    <subcellularLocation>
        <location evidence="1">Cytoplasm</location>
        <location evidence="1">Cytoskeleton</location>
        <location evidence="1">Microtubule organizing center</location>
        <location evidence="1">Centrosome</location>
    </subcellularLocation>
</comment>
<comment type="similarity">
    <text evidence="3">Belongs to the CFAP96 family.</text>
</comment>
<evidence type="ECO:0000250" key="1">
    <source>
        <dbReference type="UniProtKB" id="A7E2U8"/>
    </source>
</evidence>
<evidence type="ECO:0000256" key="2">
    <source>
        <dbReference type="SAM" id="MobiDB-lite"/>
    </source>
</evidence>
<evidence type="ECO:0000305" key="3"/>
<reference key="1">
    <citation type="journal article" date="2005" name="Science">
        <title>The transcriptional landscape of the mammalian genome.</title>
        <authorList>
            <person name="Carninci P."/>
            <person name="Kasukawa T."/>
            <person name="Katayama S."/>
            <person name="Gough J."/>
            <person name="Frith M.C."/>
            <person name="Maeda N."/>
            <person name="Oyama R."/>
            <person name="Ravasi T."/>
            <person name="Lenhard B."/>
            <person name="Wells C."/>
            <person name="Kodzius R."/>
            <person name="Shimokawa K."/>
            <person name="Bajic V.B."/>
            <person name="Brenner S.E."/>
            <person name="Batalov S."/>
            <person name="Forrest A.R."/>
            <person name="Zavolan M."/>
            <person name="Davis M.J."/>
            <person name="Wilming L.G."/>
            <person name="Aidinis V."/>
            <person name="Allen J.E."/>
            <person name="Ambesi-Impiombato A."/>
            <person name="Apweiler R."/>
            <person name="Aturaliya R.N."/>
            <person name="Bailey T.L."/>
            <person name="Bansal M."/>
            <person name="Baxter L."/>
            <person name="Beisel K.W."/>
            <person name="Bersano T."/>
            <person name="Bono H."/>
            <person name="Chalk A.M."/>
            <person name="Chiu K.P."/>
            <person name="Choudhary V."/>
            <person name="Christoffels A."/>
            <person name="Clutterbuck D.R."/>
            <person name="Crowe M.L."/>
            <person name="Dalla E."/>
            <person name="Dalrymple B.P."/>
            <person name="de Bono B."/>
            <person name="Della Gatta G."/>
            <person name="di Bernardo D."/>
            <person name="Down T."/>
            <person name="Engstrom P."/>
            <person name="Fagiolini M."/>
            <person name="Faulkner G."/>
            <person name="Fletcher C.F."/>
            <person name="Fukushima T."/>
            <person name="Furuno M."/>
            <person name="Futaki S."/>
            <person name="Gariboldi M."/>
            <person name="Georgii-Hemming P."/>
            <person name="Gingeras T.R."/>
            <person name="Gojobori T."/>
            <person name="Green R.E."/>
            <person name="Gustincich S."/>
            <person name="Harbers M."/>
            <person name="Hayashi Y."/>
            <person name="Hensch T.K."/>
            <person name="Hirokawa N."/>
            <person name="Hill D."/>
            <person name="Huminiecki L."/>
            <person name="Iacono M."/>
            <person name="Ikeo K."/>
            <person name="Iwama A."/>
            <person name="Ishikawa T."/>
            <person name="Jakt M."/>
            <person name="Kanapin A."/>
            <person name="Katoh M."/>
            <person name="Kawasawa Y."/>
            <person name="Kelso J."/>
            <person name="Kitamura H."/>
            <person name="Kitano H."/>
            <person name="Kollias G."/>
            <person name="Krishnan S.P."/>
            <person name="Kruger A."/>
            <person name="Kummerfeld S.K."/>
            <person name="Kurochkin I.V."/>
            <person name="Lareau L.F."/>
            <person name="Lazarevic D."/>
            <person name="Lipovich L."/>
            <person name="Liu J."/>
            <person name="Liuni S."/>
            <person name="McWilliam S."/>
            <person name="Madan Babu M."/>
            <person name="Madera M."/>
            <person name="Marchionni L."/>
            <person name="Matsuda H."/>
            <person name="Matsuzawa S."/>
            <person name="Miki H."/>
            <person name="Mignone F."/>
            <person name="Miyake S."/>
            <person name="Morris K."/>
            <person name="Mottagui-Tabar S."/>
            <person name="Mulder N."/>
            <person name="Nakano N."/>
            <person name="Nakauchi H."/>
            <person name="Ng P."/>
            <person name="Nilsson R."/>
            <person name="Nishiguchi S."/>
            <person name="Nishikawa S."/>
            <person name="Nori F."/>
            <person name="Ohara O."/>
            <person name="Okazaki Y."/>
            <person name="Orlando V."/>
            <person name="Pang K.C."/>
            <person name="Pavan W.J."/>
            <person name="Pavesi G."/>
            <person name="Pesole G."/>
            <person name="Petrovsky N."/>
            <person name="Piazza S."/>
            <person name="Reed J."/>
            <person name="Reid J.F."/>
            <person name="Ring B.Z."/>
            <person name="Ringwald M."/>
            <person name="Rost B."/>
            <person name="Ruan Y."/>
            <person name="Salzberg S.L."/>
            <person name="Sandelin A."/>
            <person name="Schneider C."/>
            <person name="Schoenbach C."/>
            <person name="Sekiguchi K."/>
            <person name="Semple C.A."/>
            <person name="Seno S."/>
            <person name="Sessa L."/>
            <person name="Sheng Y."/>
            <person name="Shibata Y."/>
            <person name="Shimada H."/>
            <person name="Shimada K."/>
            <person name="Silva D."/>
            <person name="Sinclair B."/>
            <person name="Sperling S."/>
            <person name="Stupka E."/>
            <person name="Sugiura K."/>
            <person name="Sultana R."/>
            <person name="Takenaka Y."/>
            <person name="Taki K."/>
            <person name="Tammoja K."/>
            <person name="Tan S.L."/>
            <person name="Tang S."/>
            <person name="Taylor M.S."/>
            <person name="Tegner J."/>
            <person name="Teichmann S.A."/>
            <person name="Ueda H.R."/>
            <person name="van Nimwegen E."/>
            <person name="Verardo R."/>
            <person name="Wei C.L."/>
            <person name="Yagi K."/>
            <person name="Yamanishi H."/>
            <person name="Zabarovsky E."/>
            <person name="Zhu S."/>
            <person name="Zimmer A."/>
            <person name="Hide W."/>
            <person name="Bult C."/>
            <person name="Grimmond S.M."/>
            <person name="Teasdale R.D."/>
            <person name="Liu E.T."/>
            <person name="Brusic V."/>
            <person name="Quackenbush J."/>
            <person name="Wahlestedt C."/>
            <person name="Mattick J.S."/>
            <person name="Hume D.A."/>
            <person name="Kai C."/>
            <person name="Sasaki D."/>
            <person name="Tomaru Y."/>
            <person name="Fukuda S."/>
            <person name="Kanamori-Katayama M."/>
            <person name="Suzuki M."/>
            <person name="Aoki J."/>
            <person name="Arakawa T."/>
            <person name="Iida J."/>
            <person name="Imamura K."/>
            <person name="Itoh M."/>
            <person name="Kato T."/>
            <person name="Kawaji H."/>
            <person name="Kawagashira N."/>
            <person name="Kawashima T."/>
            <person name="Kojima M."/>
            <person name="Kondo S."/>
            <person name="Konno H."/>
            <person name="Nakano K."/>
            <person name="Ninomiya N."/>
            <person name="Nishio T."/>
            <person name="Okada M."/>
            <person name="Plessy C."/>
            <person name="Shibata K."/>
            <person name="Shiraki T."/>
            <person name="Suzuki S."/>
            <person name="Tagami M."/>
            <person name="Waki K."/>
            <person name="Watahiki A."/>
            <person name="Okamura-Oho Y."/>
            <person name="Suzuki H."/>
            <person name="Kawai J."/>
            <person name="Hayashizaki Y."/>
        </authorList>
    </citation>
    <scope>NUCLEOTIDE SEQUENCE [LARGE SCALE MRNA]</scope>
    <source>
        <strain>NOD</strain>
    </source>
</reference>
<reference key="2">
    <citation type="journal article" date="2004" name="Genome Res.">
        <title>The status, quality, and expansion of the NIH full-length cDNA project: the Mammalian Gene Collection (MGC).</title>
        <authorList>
            <consortium name="The MGC Project Team"/>
        </authorList>
    </citation>
    <scope>NUCLEOTIDE SEQUENCE [LARGE SCALE MRNA]</scope>
</reference>
<sequence>MPIEGGKTDMERIGLFSEMEYITVGDKYVSPFNRPFNEAASKNRQILPGGTKEMSSLQAGYFDSQFARIFEGEGYVNLNQVRRRYMLAESKKNLGKAFIPSSGEKKPSGLGSYYGTIGGPVPFFSAQIKPKDKYQPPGKNLYTNPGKKGTGYGYANVTIGKQLSHSSDLYDAARQSYKKESEEHHRLIKGSPFKLHLHPKDYFDTNPYFLEHHLPPLRREEKKEVSFKPFKPSSPGKKAGGMKAGAFDPYPAHSADPYVVKVEKAIPSKGERVFHPPNGPKSRPVESIMALNVKRALNVKNYKNASSTTLGKQLVF</sequence>
<keyword id="KW-0963">Cytoplasm</keyword>
<keyword id="KW-0206">Cytoskeleton</keyword>
<keyword id="KW-1185">Reference proteome</keyword>
<proteinExistence type="evidence at transcript level"/>
<name>CFA96_MOUSE</name>
<protein>
    <recommendedName>
        <fullName>Cilia-and flagella-associated protein 96</fullName>
    </recommendedName>
</protein>